<protein>
    <recommendedName>
        <fullName evidence="1">Co-chaperone protein HscB homolog</fullName>
    </recommendedName>
</protein>
<proteinExistence type="inferred from homology"/>
<comment type="function">
    <text evidence="1">Co-chaperone involved in the maturation of iron-sulfur cluster-containing proteins. Seems to help targeting proteins to be folded toward HscA.</text>
</comment>
<comment type="subunit">
    <text evidence="1">Interacts with HscA and stimulates its ATPase activity.</text>
</comment>
<comment type="similarity">
    <text evidence="1">Belongs to the HscB family.</text>
</comment>
<organism>
    <name type="scientific">Shewanella baltica (strain OS185)</name>
    <dbReference type="NCBI Taxonomy" id="402882"/>
    <lineage>
        <taxon>Bacteria</taxon>
        <taxon>Pseudomonadati</taxon>
        <taxon>Pseudomonadota</taxon>
        <taxon>Gammaproteobacteria</taxon>
        <taxon>Alteromonadales</taxon>
        <taxon>Shewanellaceae</taxon>
        <taxon>Shewanella</taxon>
    </lineage>
</organism>
<evidence type="ECO:0000255" key="1">
    <source>
        <dbReference type="HAMAP-Rule" id="MF_00682"/>
    </source>
</evidence>
<gene>
    <name evidence="1" type="primary">hscB</name>
    <name type="ordered locus">Shew185_2383</name>
</gene>
<reference key="1">
    <citation type="submission" date="2007-07" db="EMBL/GenBank/DDBJ databases">
        <title>Complete sequence of chromosome of Shewanella baltica OS185.</title>
        <authorList>
            <consortium name="US DOE Joint Genome Institute"/>
            <person name="Copeland A."/>
            <person name="Lucas S."/>
            <person name="Lapidus A."/>
            <person name="Barry K."/>
            <person name="Glavina del Rio T."/>
            <person name="Dalin E."/>
            <person name="Tice H."/>
            <person name="Pitluck S."/>
            <person name="Sims D."/>
            <person name="Brettin T."/>
            <person name="Bruce D."/>
            <person name="Detter J.C."/>
            <person name="Han C."/>
            <person name="Schmutz J."/>
            <person name="Larimer F."/>
            <person name="Land M."/>
            <person name="Hauser L."/>
            <person name="Kyrpides N."/>
            <person name="Mikhailova N."/>
            <person name="Brettar I."/>
            <person name="Rodrigues J."/>
            <person name="Konstantinidis K."/>
            <person name="Tiedje J."/>
            <person name="Richardson P."/>
        </authorList>
    </citation>
    <scope>NUCLEOTIDE SEQUENCE [LARGE SCALE GENOMIC DNA]</scope>
    <source>
        <strain>OS185</strain>
    </source>
</reference>
<sequence length="174" mass="20210">MNYFELFKFSPAFDIDTALLAERYRELQRAVHPDKFANDTEQQKLLSVQRTAQVNDGFQTLKDPIRRAEHMLSLRGIELSHETTTVKDTGFLMQQMEWREALEDIRDSADPQASIDELYQSFAQYRAQLTQQLTQLLTSEQAEDALLAADQVRKLKFMAKLHDELTRVEDALLD</sequence>
<name>HSCB_SHEB8</name>
<feature type="chain" id="PRO_1000083035" description="Co-chaperone protein HscB homolog">
    <location>
        <begin position="1"/>
        <end position="174"/>
    </location>
</feature>
<feature type="domain" description="J" evidence="1">
    <location>
        <begin position="2"/>
        <end position="74"/>
    </location>
</feature>
<keyword id="KW-0143">Chaperone</keyword>
<dbReference type="EMBL" id="CP000753">
    <property type="protein sequence ID" value="ABS08521.1"/>
    <property type="molecule type" value="Genomic_DNA"/>
</dbReference>
<dbReference type="RefSeq" id="WP_012089341.1">
    <property type="nucleotide sequence ID" value="NC_009665.1"/>
</dbReference>
<dbReference type="SMR" id="A6WNY2"/>
<dbReference type="KEGG" id="sbm:Shew185_2383"/>
<dbReference type="HOGENOM" id="CLU_068529_2_0_6"/>
<dbReference type="GO" id="GO:1990230">
    <property type="term" value="C:iron-sulfur cluster transfer complex"/>
    <property type="evidence" value="ECO:0007669"/>
    <property type="project" value="TreeGrafter"/>
</dbReference>
<dbReference type="GO" id="GO:0001671">
    <property type="term" value="F:ATPase activator activity"/>
    <property type="evidence" value="ECO:0007669"/>
    <property type="project" value="InterPro"/>
</dbReference>
<dbReference type="GO" id="GO:0051087">
    <property type="term" value="F:protein-folding chaperone binding"/>
    <property type="evidence" value="ECO:0007669"/>
    <property type="project" value="InterPro"/>
</dbReference>
<dbReference type="GO" id="GO:0044571">
    <property type="term" value="P:[2Fe-2S] cluster assembly"/>
    <property type="evidence" value="ECO:0007669"/>
    <property type="project" value="InterPro"/>
</dbReference>
<dbReference type="GO" id="GO:0051259">
    <property type="term" value="P:protein complex oligomerization"/>
    <property type="evidence" value="ECO:0007669"/>
    <property type="project" value="InterPro"/>
</dbReference>
<dbReference type="GO" id="GO:0006457">
    <property type="term" value="P:protein folding"/>
    <property type="evidence" value="ECO:0007669"/>
    <property type="project" value="UniProtKB-UniRule"/>
</dbReference>
<dbReference type="CDD" id="cd06257">
    <property type="entry name" value="DnaJ"/>
    <property type="match status" value="1"/>
</dbReference>
<dbReference type="Gene3D" id="1.10.287.110">
    <property type="entry name" value="DnaJ domain"/>
    <property type="match status" value="1"/>
</dbReference>
<dbReference type="Gene3D" id="1.20.1280.20">
    <property type="entry name" value="HscB, C-terminal domain"/>
    <property type="match status" value="1"/>
</dbReference>
<dbReference type="HAMAP" id="MF_00682">
    <property type="entry name" value="HscB"/>
    <property type="match status" value="1"/>
</dbReference>
<dbReference type="InterPro" id="IPR001623">
    <property type="entry name" value="DnaJ_domain"/>
</dbReference>
<dbReference type="InterPro" id="IPR004640">
    <property type="entry name" value="HscB"/>
</dbReference>
<dbReference type="InterPro" id="IPR036386">
    <property type="entry name" value="HscB_C_sf"/>
</dbReference>
<dbReference type="InterPro" id="IPR009073">
    <property type="entry name" value="HscB_oligo_C"/>
</dbReference>
<dbReference type="InterPro" id="IPR036869">
    <property type="entry name" value="J_dom_sf"/>
</dbReference>
<dbReference type="NCBIfam" id="TIGR00714">
    <property type="entry name" value="hscB"/>
    <property type="match status" value="1"/>
</dbReference>
<dbReference type="NCBIfam" id="NF003449">
    <property type="entry name" value="PRK05014.1"/>
    <property type="match status" value="1"/>
</dbReference>
<dbReference type="PANTHER" id="PTHR14021">
    <property type="entry name" value="IRON-SULFUR CLUSTER CO-CHAPERONE PROTEIN HSCB"/>
    <property type="match status" value="1"/>
</dbReference>
<dbReference type="PANTHER" id="PTHR14021:SF15">
    <property type="entry name" value="IRON-SULFUR CLUSTER CO-CHAPERONE PROTEIN HSCB"/>
    <property type="match status" value="1"/>
</dbReference>
<dbReference type="Pfam" id="PF07743">
    <property type="entry name" value="HSCB_C"/>
    <property type="match status" value="1"/>
</dbReference>
<dbReference type="SMART" id="SM00271">
    <property type="entry name" value="DnaJ"/>
    <property type="match status" value="1"/>
</dbReference>
<dbReference type="SUPFAM" id="SSF46565">
    <property type="entry name" value="Chaperone J-domain"/>
    <property type="match status" value="1"/>
</dbReference>
<dbReference type="SUPFAM" id="SSF47144">
    <property type="entry name" value="HSC20 (HSCB), C-terminal oligomerisation domain"/>
    <property type="match status" value="1"/>
</dbReference>
<dbReference type="PROSITE" id="PS50076">
    <property type="entry name" value="DNAJ_2"/>
    <property type="match status" value="1"/>
</dbReference>
<accession>A6WNY2</accession>